<gene>
    <name evidence="1" type="primary">ispH</name>
    <name type="ordered locus">YE0619</name>
</gene>
<keyword id="KW-0004">4Fe-4S</keyword>
<keyword id="KW-0408">Iron</keyword>
<keyword id="KW-0411">Iron-sulfur</keyword>
<keyword id="KW-0414">Isoprene biosynthesis</keyword>
<keyword id="KW-0479">Metal-binding</keyword>
<keyword id="KW-0560">Oxidoreductase</keyword>
<feature type="chain" id="PRO_1000021196" description="4-hydroxy-3-methylbut-2-enyl diphosphate reductase">
    <location>
        <begin position="1"/>
        <end position="317"/>
    </location>
</feature>
<feature type="active site" description="Proton donor" evidence="1">
    <location>
        <position position="127"/>
    </location>
</feature>
<feature type="binding site" evidence="1">
    <location>
        <position position="12"/>
    </location>
    <ligand>
        <name>[4Fe-4S] cluster</name>
        <dbReference type="ChEBI" id="CHEBI:49883"/>
    </ligand>
</feature>
<feature type="binding site" evidence="1">
    <location>
        <position position="41"/>
    </location>
    <ligand>
        <name>(2E)-4-hydroxy-3-methylbut-2-enyl diphosphate</name>
        <dbReference type="ChEBI" id="CHEBI:128753"/>
    </ligand>
</feature>
<feature type="binding site" evidence="1">
    <location>
        <position position="41"/>
    </location>
    <ligand>
        <name>dimethylallyl diphosphate</name>
        <dbReference type="ChEBI" id="CHEBI:57623"/>
    </ligand>
</feature>
<feature type="binding site" evidence="1">
    <location>
        <position position="41"/>
    </location>
    <ligand>
        <name>isopentenyl diphosphate</name>
        <dbReference type="ChEBI" id="CHEBI:128769"/>
    </ligand>
</feature>
<feature type="binding site" evidence="1">
    <location>
        <position position="74"/>
    </location>
    <ligand>
        <name>(2E)-4-hydroxy-3-methylbut-2-enyl diphosphate</name>
        <dbReference type="ChEBI" id="CHEBI:128753"/>
    </ligand>
</feature>
<feature type="binding site" evidence="1">
    <location>
        <position position="74"/>
    </location>
    <ligand>
        <name>dimethylallyl diphosphate</name>
        <dbReference type="ChEBI" id="CHEBI:57623"/>
    </ligand>
</feature>
<feature type="binding site" evidence="1">
    <location>
        <position position="74"/>
    </location>
    <ligand>
        <name>isopentenyl diphosphate</name>
        <dbReference type="ChEBI" id="CHEBI:128769"/>
    </ligand>
</feature>
<feature type="binding site" evidence="1">
    <location>
        <position position="97"/>
    </location>
    <ligand>
        <name>[4Fe-4S] cluster</name>
        <dbReference type="ChEBI" id="CHEBI:49883"/>
    </ligand>
</feature>
<feature type="binding site" evidence="1">
    <location>
        <position position="125"/>
    </location>
    <ligand>
        <name>(2E)-4-hydroxy-3-methylbut-2-enyl diphosphate</name>
        <dbReference type="ChEBI" id="CHEBI:128753"/>
    </ligand>
</feature>
<feature type="binding site" evidence="1">
    <location>
        <position position="125"/>
    </location>
    <ligand>
        <name>dimethylallyl diphosphate</name>
        <dbReference type="ChEBI" id="CHEBI:57623"/>
    </ligand>
</feature>
<feature type="binding site" evidence="1">
    <location>
        <position position="125"/>
    </location>
    <ligand>
        <name>isopentenyl diphosphate</name>
        <dbReference type="ChEBI" id="CHEBI:128769"/>
    </ligand>
</feature>
<feature type="binding site" evidence="1">
    <location>
        <position position="168"/>
    </location>
    <ligand>
        <name>(2E)-4-hydroxy-3-methylbut-2-enyl diphosphate</name>
        <dbReference type="ChEBI" id="CHEBI:128753"/>
    </ligand>
</feature>
<feature type="binding site" evidence="1">
    <location>
        <position position="198"/>
    </location>
    <ligand>
        <name>[4Fe-4S] cluster</name>
        <dbReference type="ChEBI" id="CHEBI:49883"/>
    </ligand>
</feature>
<feature type="binding site" evidence="1">
    <location>
        <position position="226"/>
    </location>
    <ligand>
        <name>(2E)-4-hydroxy-3-methylbut-2-enyl diphosphate</name>
        <dbReference type="ChEBI" id="CHEBI:128753"/>
    </ligand>
</feature>
<feature type="binding site" evidence="1">
    <location>
        <position position="226"/>
    </location>
    <ligand>
        <name>dimethylallyl diphosphate</name>
        <dbReference type="ChEBI" id="CHEBI:57623"/>
    </ligand>
</feature>
<feature type="binding site" evidence="1">
    <location>
        <position position="226"/>
    </location>
    <ligand>
        <name>isopentenyl diphosphate</name>
        <dbReference type="ChEBI" id="CHEBI:128769"/>
    </ligand>
</feature>
<feature type="binding site" evidence="1">
    <location>
        <position position="227"/>
    </location>
    <ligand>
        <name>(2E)-4-hydroxy-3-methylbut-2-enyl diphosphate</name>
        <dbReference type="ChEBI" id="CHEBI:128753"/>
    </ligand>
</feature>
<feature type="binding site" evidence="1">
    <location>
        <position position="227"/>
    </location>
    <ligand>
        <name>dimethylallyl diphosphate</name>
        <dbReference type="ChEBI" id="CHEBI:57623"/>
    </ligand>
</feature>
<feature type="binding site" evidence="1">
    <location>
        <position position="227"/>
    </location>
    <ligand>
        <name>isopentenyl diphosphate</name>
        <dbReference type="ChEBI" id="CHEBI:128769"/>
    </ligand>
</feature>
<feature type="binding site" evidence="1">
    <location>
        <position position="228"/>
    </location>
    <ligand>
        <name>(2E)-4-hydroxy-3-methylbut-2-enyl diphosphate</name>
        <dbReference type="ChEBI" id="CHEBI:128753"/>
    </ligand>
</feature>
<feature type="binding site" evidence="1">
    <location>
        <position position="228"/>
    </location>
    <ligand>
        <name>dimethylallyl diphosphate</name>
        <dbReference type="ChEBI" id="CHEBI:57623"/>
    </ligand>
</feature>
<feature type="binding site" evidence="1">
    <location>
        <position position="228"/>
    </location>
    <ligand>
        <name>isopentenyl diphosphate</name>
        <dbReference type="ChEBI" id="CHEBI:128769"/>
    </ligand>
</feature>
<feature type="binding site" evidence="1">
    <location>
        <position position="270"/>
    </location>
    <ligand>
        <name>(2E)-4-hydroxy-3-methylbut-2-enyl diphosphate</name>
        <dbReference type="ChEBI" id="CHEBI:128753"/>
    </ligand>
</feature>
<feature type="binding site" evidence="1">
    <location>
        <position position="270"/>
    </location>
    <ligand>
        <name>dimethylallyl diphosphate</name>
        <dbReference type="ChEBI" id="CHEBI:57623"/>
    </ligand>
</feature>
<feature type="binding site" evidence="1">
    <location>
        <position position="270"/>
    </location>
    <ligand>
        <name>isopentenyl diphosphate</name>
        <dbReference type="ChEBI" id="CHEBI:128769"/>
    </ligand>
</feature>
<name>ISPH_YERE8</name>
<sequence>MQILLANPRGFCAGVDRAISIVERAIEMYGAPIYVRHEVVHNRYVVDSLRERGAIFIEDIAEVPDGSILIFSAHGVSQAVRAEARARELTMLFDATCPLVTKVHMEVARASRKGKEAILIGHAGHPEVEGTMGQYNNPKGGMYLVESPDDVWKLNVKDENNLCFMTQTTLSVDDTSAVIDALHRRFPKIIGPRKDDICYATTNRQEAVRNLANDADVVLVVGSKNSSNSNRLAELAQRMGKPAYLIDSAADIQESWLQNAKCIGVTAGASAPDILVQQVIARLQALGAVGSVELRGREESIVFEVPKELRVEVKQVD</sequence>
<evidence type="ECO:0000255" key="1">
    <source>
        <dbReference type="HAMAP-Rule" id="MF_00191"/>
    </source>
</evidence>
<reference key="1">
    <citation type="journal article" date="2006" name="PLoS Genet.">
        <title>The complete genome sequence and comparative genome analysis of the high pathogenicity Yersinia enterocolitica strain 8081.</title>
        <authorList>
            <person name="Thomson N.R."/>
            <person name="Howard S."/>
            <person name="Wren B.W."/>
            <person name="Holden M.T.G."/>
            <person name="Crossman L."/>
            <person name="Challis G.L."/>
            <person name="Churcher C."/>
            <person name="Mungall K."/>
            <person name="Brooks K."/>
            <person name="Chillingworth T."/>
            <person name="Feltwell T."/>
            <person name="Abdellah Z."/>
            <person name="Hauser H."/>
            <person name="Jagels K."/>
            <person name="Maddison M."/>
            <person name="Moule S."/>
            <person name="Sanders M."/>
            <person name="Whitehead S."/>
            <person name="Quail M.A."/>
            <person name="Dougan G."/>
            <person name="Parkhill J."/>
            <person name="Prentice M.B."/>
        </authorList>
    </citation>
    <scope>NUCLEOTIDE SEQUENCE [LARGE SCALE GENOMIC DNA]</scope>
    <source>
        <strain>NCTC 13174 / 8081</strain>
    </source>
</reference>
<organism>
    <name type="scientific">Yersinia enterocolitica serotype O:8 / biotype 1B (strain NCTC 13174 / 8081)</name>
    <dbReference type="NCBI Taxonomy" id="393305"/>
    <lineage>
        <taxon>Bacteria</taxon>
        <taxon>Pseudomonadati</taxon>
        <taxon>Pseudomonadota</taxon>
        <taxon>Gammaproteobacteria</taxon>
        <taxon>Enterobacterales</taxon>
        <taxon>Yersiniaceae</taxon>
        <taxon>Yersinia</taxon>
    </lineage>
</organism>
<proteinExistence type="inferred from homology"/>
<protein>
    <recommendedName>
        <fullName evidence="1">4-hydroxy-3-methylbut-2-enyl diphosphate reductase</fullName>
        <shortName evidence="1">HMBPP reductase</shortName>
        <ecNumber evidence="1">1.17.7.4</ecNumber>
    </recommendedName>
</protein>
<comment type="function">
    <text evidence="1">Catalyzes the conversion of 1-hydroxy-2-methyl-2-(E)-butenyl 4-diphosphate (HMBPP) into a mixture of isopentenyl diphosphate (IPP) and dimethylallyl diphosphate (DMAPP). Acts in the terminal step of the DOXP/MEP pathway for isoprenoid precursor biosynthesis.</text>
</comment>
<comment type="catalytic activity">
    <reaction evidence="1">
        <text>isopentenyl diphosphate + 2 oxidized [2Fe-2S]-[ferredoxin] + H2O = (2E)-4-hydroxy-3-methylbut-2-enyl diphosphate + 2 reduced [2Fe-2S]-[ferredoxin] + 2 H(+)</text>
        <dbReference type="Rhea" id="RHEA:24488"/>
        <dbReference type="Rhea" id="RHEA-COMP:10000"/>
        <dbReference type="Rhea" id="RHEA-COMP:10001"/>
        <dbReference type="ChEBI" id="CHEBI:15377"/>
        <dbReference type="ChEBI" id="CHEBI:15378"/>
        <dbReference type="ChEBI" id="CHEBI:33737"/>
        <dbReference type="ChEBI" id="CHEBI:33738"/>
        <dbReference type="ChEBI" id="CHEBI:128753"/>
        <dbReference type="ChEBI" id="CHEBI:128769"/>
        <dbReference type="EC" id="1.17.7.4"/>
    </reaction>
</comment>
<comment type="catalytic activity">
    <reaction evidence="1">
        <text>dimethylallyl diphosphate + 2 oxidized [2Fe-2S]-[ferredoxin] + H2O = (2E)-4-hydroxy-3-methylbut-2-enyl diphosphate + 2 reduced [2Fe-2S]-[ferredoxin] + 2 H(+)</text>
        <dbReference type="Rhea" id="RHEA:24825"/>
        <dbReference type="Rhea" id="RHEA-COMP:10000"/>
        <dbReference type="Rhea" id="RHEA-COMP:10001"/>
        <dbReference type="ChEBI" id="CHEBI:15377"/>
        <dbReference type="ChEBI" id="CHEBI:15378"/>
        <dbReference type="ChEBI" id="CHEBI:33737"/>
        <dbReference type="ChEBI" id="CHEBI:33738"/>
        <dbReference type="ChEBI" id="CHEBI:57623"/>
        <dbReference type="ChEBI" id="CHEBI:128753"/>
        <dbReference type="EC" id="1.17.7.4"/>
    </reaction>
</comment>
<comment type="cofactor">
    <cofactor evidence="1">
        <name>[4Fe-4S] cluster</name>
        <dbReference type="ChEBI" id="CHEBI:49883"/>
    </cofactor>
    <text evidence="1">Binds 1 [4Fe-4S] cluster per subunit.</text>
</comment>
<comment type="pathway">
    <text evidence="1">Isoprenoid biosynthesis; dimethylallyl diphosphate biosynthesis; dimethylallyl diphosphate from (2E)-4-hydroxy-3-methylbutenyl diphosphate: step 1/1.</text>
</comment>
<comment type="pathway">
    <text evidence="1">Isoprenoid biosynthesis; isopentenyl diphosphate biosynthesis via DXP pathway; isopentenyl diphosphate from 1-deoxy-D-xylulose 5-phosphate: step 6/6.</text>
</comment>
<comment type="subunit">
    <text evidence="1">Homodimer.</text>
</comment>
<comment type="similarity">
    <text evidence="1">Belongs to the IspH family.</text>
</comment>
<dbReference type="EC" id="1.17.7.4" evidence="1"/>
<dbReference type="EMBL" id="AM286415">
    <property type="protein sequence ID" value="CAL10732.1"/>
    <property type="molecule type" value="Genomic_DNA"/>
</dbReference>
<dbReference type="RefSeq" id="WP_011815541.1">
    <property type="nucleotide sequence ID" value="NC_008800.1"/>
</dbReference>
<dbReference type="RefSeq" id="YP_001004972.1">
    <property type="nucleotide sequence ID" value="NC_008800.1"/>
</dbReference>
<dbReference type="SMR" id="A1JJE4"/>
<dbReference type="KEGG" id="yen:YE0619"/>
<dbReference type="PATRIC" id="fig|393305.7.peg.713"/>
<dbReference type="eggNOG" id="COG0761">
    <property type="taxonomic scope" value="Bacteria"/>
</dbReference>
<dbReference type="HOGENOM" id="CLU_027486_1_0_6"/>
<dbReference type="OrthoDB" id="9804068at2"/>
<dbReference type="UniPathway" id="UPA00056">
    <property type="reaction ID" value="UER00097"/>
</dbReference>
<dbReference type="UniPathway" id="UPA00059">
    <property type="reaction ID" value="UER00105"/>
</dbReference>
<dbReference type="Proteomes" id="UP000000642">
    <property type="component" value="Chromosome"/>
</dbReference>
<dbReference type="GO" id="GO:0051539">
    <property type="term" value="F:4 iron, 4 sulfur cluster binding"/>
    <property type="evidence" value="ECO:0007669"/>
    <property type="project" value="UniProtKB-UniRule"/>
</dbReference>
<dbReference type="GO" id="GO:0051745">
    <property type="term" value="F:4-hydroxy-3-methylbut-2-enyl diphosphate reductase activity"/>
    <property type="evidence" value="ECO:0007669"/>
    <property type="project" value="UniProtKB-UniRule"/>
</dbReference>
<dbReference type="GO" id="GO:0046872">
    <property type="term" value="F:metal ion binding"/>
    <property type="evidence" value="ECO:0007669"/>
    <property type="project" value="UniProtKB-KW"/>
</dbReference>
<dbReference type="GO" id="GO:0050992">
    <property type="term" value="P:dimethylallyl diphosphate biosynthetic process"/>
    <property type="evidence" value="ECO:0007669"/>
    <property type="project" value="UniProtKB-UniRule"/>
</dbReference>
<dbReference type="GO" id="GO:0019288">
    <property type="term" value="P:isopentenyl diphosphate biosynthetic process, methylerythritol 4-phosphate pathway"/>
    <property type="evidence" value="ECO:0007669"/>
    <property type="project" value="UniProtKB-UniRule"/>
</dbReference>
<dbReference type="GO" id="GO:0016114">
    <property type="term" value="P:terpenoid biosynthetic process"/>
    <property type="evidence" value="ECO:0007669"/>
    <property type="project" value="UniProtKB-UniRule"/>
</dbReference>
<dbReference type="CDD" id="cd13944">
    <property type="entry name" value="lytB_ispH"/>
    <property type="match status" value="1"/>
</dbReference>
<dbReference type="FunFam" id="3.40.50.11270:FF:000001">
    <property type="entry name" value="4-hydroxy-3-methylbut-2-enyl diphosphate reductase"/>
    <property type="match status" value="1"/>
</dbReference>
<dbReference type="Gene3D" id="3.40.50.11270">
    <property type="match status" value="1"/>
</dbReference>
<dbReference type="Gene3D" id="3.40.1010.20">
    <property type="entry name" value="4-hydroxy-3-methylbut-2-enyl diphosphate reductase, catalytic domain"/>
    <property type="match status" value="2"/>
</dbReference>
<dbReference type="HAMAP" id="MF_00191">
    <property type="entry name" value="IspH"/>
    <property type="match status" value="1"/>
</dbReference>
<dbReference type="InterPro" id="IPR003451">
    <property type="entry name" value="LytB/IspH"/>
</dbReference>
<dbReference type="NCBIfam" id="TIGR00216">
    <property type="entry name" value="ispH_lytB"/>
    <property type="match status" value="1"/>
</dbReference>
<dbReference type="NCBIfam" id="NF002188">
    <property type="entry name" value="PRK01045.1-2"/>
    <property type="match status" value="1"/>
</dbReference>
<dbReference type="NCBIfam" id="NF002190">
    <property type="entry name" value="PRK01045.1-4"/>
    <property type="match status" value="1"/>
</dbReference>
<dbReference type="PANTHER" id="PTHR30426">
    <property type="entry name" value="4-HYDROXY-3-METHYLBUT-2-ENYL DIPHOSPHATE REDUCTASE"/>
    <property type="match status" value="1"/>
</dbReference>
<dbReference type="PANTHER" id="PTHR30426:SF0">
    <property type="entry name" value="4-HYDROXY-3-METHYLBUT-2-ENYL DIPHOSPHATE REDUCTASE"/>
    <property type="match status" value="1"/>
</dbReference>
<dbReference type="Pfam" id="PF02401">
    <property type="entry name" value="LYTB"/>
    <property type="match status" value="1"/>
</dbReference>
<accession>A1JJE4</accession>